<accession>Q3SAE9</accession>
<comment type="function">
    <text evidence="1 2">Snake venom natriuretic peptide that targets both NPR1 (EC(50)=1080.0 nM) and NPR2 (EC(50)=328.60 nM) (PubMed:25735823). Exhibits hypotensive and vasodepressor activities (By similarity).</text>
</comment>
<comment type="subcellular location">
    <subcellularLocation>
        <location evidence="6">Secreted</location>
    </subcellularLocation>
</comment>
<comment type="tissue specificity">
    <text evidence="6">Expressed by the venom gland.</text>
</comment>
<comment type="PTM">
    <text evidence="2">O-linked glycans consist of galactosyl-beta(1-3)-N-acetylgalactosamine (Gal-GalNAc).</text>
</comment>
<comment type="PTM">
    <text evidence="2">The synthetic non-glycosylated form shows higher potency on natriuretic receptors (EC(50)=672.90 nM) and NPR2 (EC(50)=261.0 nM).</text>
</comment>
<comment type="mass spectrometry" mass="3239.23" method="Electrospray" evidence="2">
    <text>Non-reduced.</text>
</comment>
<comment type="miscellaneous">
    <text evidence="2">The synthetic glycopeptide is highly stable in rat plasma even after 48 hours. The synthetic non-glycosylated form shows similar stability. This stability is probably due to its C-terminal tail.</text>
</comment>
<comment type="miscellaneous">
    <text evidence="2">Accounts for about 2.2% of venom.</text>
</comment>
<comment type="similarity">
    <text evidence="5">Belongs to the natriuretic peptide family.</text>
</comment>
<reference key="1">
    <citation type="journal article" date="2006" name="Biochimie">
        <title>Cloning and characterisation of natriuretic peptides from the venom glands of Australian elapids.</title>
        <authorList>
            <person name="St Pierre L."/>
            <person name="Flight S."/>
            <person name="Masci P.P."/>
            <person name="Hanchard K.J."/>
            <person name="Lewis R.J."/>
            <person name="Alewood P.F."/>
            <person name="de Jersey J."/>
            <person name="Lavin M.F."/>
        </authorList>
    </citation>
    <scope>NUCLEOTIDE SEQUENCE [MRNA]</scope>
    <source>
        <tissue>Venom gland</tissue>
    </source>
</reference>
<reference key="2">
    <citation type="journal article" date="2015" name="Angew. Chem. Int. Ed.">
        <title>A defined alpha-helix in the bifunctional O-glycosylated natriuretic peptide TcNPa from the venom of Tropidechis carinatus.</title>
        <authorList>
            <person name="Reeks T."/>
            <person name="Jones A."/>
            <person name="Brust A."/>
            <person name="Sridharan S."/>
            <person name="Corcilius L."/>
            <person name="Wilkinson B.L."/>
            <person name="Thaysen-Andersen M."/>
            <person name="Payne R.J."/>
            <person name="Kini R.M."/>
            <person name="Daly N.L."/>
            <person name="Alewood P.F."/>
        </authorList>
    </citation>
    <scope>PROTEIN SEQUENCE OF 9-39</scope>
    <scope>IDENTIFICATION BY MASS SPECTROMETRY</scope>
    <scope>FUNCTION</scope>
    <scope>STRUCTURE BY NMR OF 9-39</scope>
    <scope>GLYCOSYLATION AT THR-35</scope>
    <scope>DISULFIDE BOND</scope>
    <scope>SYNTHESIS OF 9-39</scope>
    <scope>MASS SPECTROMETRY</scope>
    <source>
        <tissue>Venom</tissue>
    </source>
</reference>
<evidence type="ECO:0000250" key="1">
    <source>
        <dbReference type="UniProtKB" id="C6EVG7"/>
    </source>
</evidence>
<evidence type="ECO:0000269" key="2">
    <source>
    </source>
</evidence>
<evidence type="ECO:0000303" key="3">
    <source>
    </source>
</evidence>
<evidence type="ECO:0000303" key="4">
    <source>
    </source>
</evidence>
<evidence type="ECO:0000305" key="5"/>
<evidence type="ECO:0000305" key="6">
    <source>
    </source>
</evidence>
<name>VNPA_TROCA</name>
<proteinExistence type="evidence at protein level"/>
<dbReference type="EMBL" id="DQ116731">
    <property type="protein sequence ID" value="AAZ82826.1"/>
    <property type="molecule type" value="mRNA"/>
</dbReference>
<dbReference type="GO" id="GO:0005576">
    <property type="term" value="C:extracellular region"/>
    <property type="evidence" value="ECO:0007669"/>
    <property type="project" value="UniProtKB-SubCell"/>
</dbReference>
<dbReference type="GO" id="GO:0005179">
    <property type="term" value="F:hormone activity"/>
    <property type="evidence" value="ECO:0007669"/>
    <property type="project" value="InterPro"/>
</dbReference>
<dbReference type="GO" id="GO:0090729">
    <property type="term" value="F:toxin activity"/>
    <property type="evidence" value="ECO:0007669"/>
    <property type="project" value="UniProtKB-KW"/>
</dbReference>
<dbReference type="GO" id="GO:0008217">
    <property type="term" value="P:regulation of blood pressure"/>
    <property type="evidence" value="ECO:0007669"/>
    <property type="project" value="UniProtKB-KW"/>
</dbReference>
<dbReference type="GO" id="GO:0042311">
    <property type="term" value="P:vasodilation"/>
    <property type="evidence" value="ECO:0007669"/>
    <property type="project" value="UniProtKB-KW"/>
</dbReference>
<dbReference type="InterPro" id="IPR000663">
    <property type="entry name" value="Natr_peptide"/>
</dbReference>
<dbReference type="InterPro" id="IPR030480">
    <property type="entry name" value="Natr_peptide_CS"/>
</dbReference>
<dbReference type="Pfam" id="PF00212">
    <property type="entry name" value="ANP"/>
    <property type="match status" value="1"/>
</dbReference>
<dbReference type="SMART" id="SM00183">
    <property type="entry name" value="NAT_PEP"/>
    <property type="match status" value="1"/>
</dbReference>
<dbReference type="PROSITE" id="PS00263">
    <property type="entry name" value="NATRIURETIC_PEPTIDE"/>
    <property type="match status" value="1"/>
</dbReference>
<protein>
    <recommendedName>
        <fullName evidence="4">Natriuretic peptide TcNPa</fullName>
        <shortName evidence="3">TcNP-a</shortName>
    </recommendedName>
</protein>
<keyword id="KW-0903">Direct protein sequencing</keyword>
<keyword id="KW-1015">Disulfide bond</keyword>
<keyword id="KW-0325">Glycoprotein</keyword>
<keyword id="KW-0382">Hypotensive agent</keyword>
<keyword id="KW-0964">Secreted</keyword>
<keyword id="KW-0800">Toxin</keyword>
<keyword id="KW-0838">Vasoactive</keyword>
<keyword id="KW-0840">Vasodilator</keyword>
<organism>
    <name type="scientific">Tropidechis carinatus</name>
    <name type="common">Australian rough-scaled snake</name>
    <dbReference type="NCBI Taxonomy" id="100989"/>
    <lineage>
        <taxon>Eukaryota</taxon>
        <taxon>Metazoa</taxon>
        <taxon>Chordata</taxon>
        <taxon>Craniata</taxon>
        <taxon>Vertebrata</taxon>
        <taxon>Euteleostomi</taxon>
        <taxon>Lepidosauria</taxon>
        <taxon>Squamata</taxon>
        <taxon>Bifurcata</taxon>
        <taxon>Unidentata</taxon>
        <taxon>Episquamata</taxon>
        <taxon>Toxicofera</taxon>
        <taxon>Serpentes</taxon>
        <taxon>Colubroidea</taxon>
        <taxon>Elapidae</taxon>
        <taxon>Notechinae</taxon>
        <taxon>Tropidechis</taxon>
    </lineage>
</organism>
<sequence length="39" mass="3652">SGSETAKIGDGCFGLPIDRIGSASGMGCGSVPKPTPGGS</sequence>
<feature type="propeptide" id="PRO_0000459643" evidence="5">
    <location>
        <begin position="1" status="less than"/>
        <end position="8"/>
    </location>
</feature>
<feature type="peptide" id="PRO_5000140409" description="Natriuretic peptide TcNPa" evidence="2">
    <location>
        <begin position="9"/>
        <end position="39"/>
    </location>
</feature>
<feature type="glycosylation site" description="O-linked (GalNAc...) threonine" evidence="2">
    <location>
        <position position="35"/>
    </location>
</feature>
<feature type="disulfide bond" evidence="2">
    <location>
        <begin position="12"/>
        <end position="28"/>
    </location>
</feature>
<feature type="non-terminal residue">
    <location>
        <position position="1"/>
    </location>
</feature>